<feature type="chain" id="PRO_1000149199" description="2-isopropylmalate synthase">
    <location>
        <begin position="1"/>
        <end position="523"/>
    </location>
</feature>
<feature type="domain" description="Pyruvate carboxyltransferase" evidence="1">
    <location>
        <begin position="5"/>
        <end position="267"/>
    </location>
</feature>
<feature type="region of interest" description="Regulatory domain" evidence="1">
    <location>
        <begin position="392"/>
        <end position="523"/>
    </location>
</feature>
<feature type="binding site" evidence="1">
    <location>
        <position position="14"/>
    </location>
    <ligand>
        <name>Mn(2+)</name>
        <dbReference type="ChEBI" id="CHEBI:29035"/>
    </ligand>
</feature>
<feature type="binding site" evidence="1">
    <location>
        <position position="202"/>
    </location>
    <ligand>
        <name>Mn(2+)</name>
        <dbReference type="ChEBI" id="CHEBI:29035"/>
    </ligand>
</feature>
<feature type="binding site" evidence="1">
    <location>
        <position position="204"/>
    </location>
    <ligand>
        <name>Mn(2+)</name>
        <dbReference type="ChEBI" id="CHEBI:29035"/>
    </ligand>
</feature>
<feature type="binding site" evidence="1">
    <location>
        <position position="238"/>
    </location>
    <ligand>
        <name>Mn(2+)</name>
        <dbReference type="ChEBI" id="CHEBI:29035"/>
    </ligand>
</feature>
<protein>
    <recommendedName>
        <fullName evidence="1">2-isopropylmalate synthase</fullName>
        <ecNumber evidence="1">2.3.3.13</ecNumber>
    </recommendedName>
    <alternativeName>
        <fullName evidence="1">Alpha-IPM synthase</fullName>
    </alternativeName>
    <alternativeName>
        <fullName evidence="1">Alpha-isopropylmalate synthase</fullName>
    </alternativeName>
</protein>
<proteinExistence type="inferred from homology"/>
<gene>
    <name evidence="1" type="primary">leuA</name>
    <name type="ordered locus">ESA_03264</name>
</gene>
<evidence type="ECO:0000255" key="1">
    <source>
        <dbReference type="HAMAP-Rule" id="MF_01025"/>
    </source>
</evidence>
<accession>A7MIC5</accession>
<reference key="1">
    <citation type="journal article" date="2010" name="PLoS ONE">
        <title>Genome sequence of Cronobacter sakazakii BAA-894 and comparative genomic hybridization analysis with other Cronobacter species.</title>
        <authorList>
            <person name="Kucerova E."/>
            <person name="Clifton S.W."/>
            <person name="Xia X.Q."/>
            <person name="Long F."/>
            <person name="Porwollik S."/>
            <person name="Fulton L."/>
            <person name="Fronick C."/>
            <person name="Minx P."/>
            <person name="Kyung K."/>
            <person name="Warren W."/>
            <person name="Fulton R."/>
            <person name="Feng D."/>
            <person name="Wollam A."/>
            <person name="Shah N."/>
            <person name="Bhonagiri V."/>
            <person name="Nash W.E."/>
            <person name="Hallsworth-Pepin K."/>
            <person name="Wilson R.K."/>
            <person name="McClelland M."/>
            <person name="Forsythe S.J."/>
        </authorList>
    </citation>
    <scope>NUCLEOTIDE SEQUENCE [LARGE SCALE GENOMIC DNA]</scope>
    <source>
        <strain>ATCC BAA-894</strain>
    </source>
</reference>
<dbReference type="EC" id="2.3.3.13" evidence="1"/>
<dbReference type="EMBL" id="CP000783">
    <property type="protein sequence ID" value="ABU78486.1"/>
    <property type="molecule type" value="Genomic_DNA"/>
</dbReference>
<dbReference type="RefSeq" id="WP_007847237.1">
    <property type="nucleotide sequence ID" value="NC_009778.1"/>
</dbReference>
<dbReference type="SMR" id="A7MIC5"/>
<dbReference type="KEGG" id="esa:ESA_03264"/>
<dbReference type="HOGENOM" id="CLU_022158_0_1_6"/>
<dbReference type="UniPathway" id="UPA00048">
    <property type="reaction ID" value="UER00070"/>
</dbReference>
<dbReference type="Proteomes" id="UP000000260">
    <property type="component" value="Chromosome"/>
</dbReference>
<dbReference type="GO" id="GO:0005829">
    <property type="term" value="C:cytosol"/>
    <property type="evidence" value="ECO:0007669"/>
    <property type="project" value="TreeGrafter"/>
</dbReference>
<dbReference type="GO" id="GO:0003852">
    <property type="term" value="F:2-isopropylmalate synthase activity"/>
    <property type="evidence" value="ECO:0007669"/>
    <property type="project" value="UniProtKB-UniRule"/>
</dbReference>
<dbReference type="GO" id="GO:0003985">
    <property type="term" value="F:acetyl-CoA C-acetyltransferase activity"/>
    <property type="evidence" value="ECO:0007669"/>
    <property type="project" value="UniProtKB-UniRule"/>
</dbReference>
<dbReference type="GO" id="GO:0030145">
    <property type="term" value="F:manganese ion binding"/>
    <property type="evidence" value="ECO:0007669"/>
    <property type="project" value="UniProtKB-UniRule"/>
</dbReference>
<dbReference type="GO" id="GO:0009098">
    <property type="term" value="P:L-leucine biosynthetic process"/>
    <property type="evidence" value="ECO:0007669"/>
    <property type="project" value="UniProtKB-UniRule"/>
</dbReference>
<dbReference type="CDD" id="cd07940">
    <property type="entry name" value="DRE_TIM_IPMS"/>
    <property type="match status" value="1"/>
</dbReference>
<dbReference type="FunFam" id="1.10.238.260:FF:000001">
    <property type="entry name" value="2-isopropylmalate synthase"/>
    <property type="match status" value="1"/>
</dbReference>
<dbReference type="FunFam" id="3.20.20.70:FF:000010">
    <property type="entry name" value="2-isopropylmalate synthase"/>
    <property type="match status" value="1"/>
</dbReference>
<dbReference type="FunFam" id="3.30.160.270:FF:000001">
    <property type="entry name" value="2-isopropylmalate synthase"/>
    <property type="match status" value="1"/>
</dbReference>
<dbReference type="Gene3D" id="1.10.238.260">
    <property type="match status" value="1"/>
</dbReference>
<dbReference type="Gene3D" id="3.30.160.270">
    <property type="match status" value="1"/>
</dbReference>
<dbReference type="Gene3D" id="3.20.20.70">
    <property type="entry name" value="Aldolase class I"/>
    <property type="match status" value="1"/>
</dbReference>
<dbReference type="HAMAP" id="MF_01025">
    <property type="entry name" value="LeuA_type1"/>
    <property type="match status" value="1"/>
</dbReference>
<dbReference type="InterPro" id="IPR050073">
    <property type="entry name" value="2-IPM_HCS-like"/>
</dbReference>
<dbReference type="InterPro" id="IPR013709">
    <property type="entry name" value="2-isopropylmalate_synth_dimer"/>
</dbReference>
<dbReference type="InterPro" id="IPR002034">
    <property type="entry name" value="AIPM/Hcit_synth_CS"/>
</dbReference>
<dbReference type="InterPro" id="IPR013785">
    <property type="entry name" value="Aldolase_TIM"/>
</dbReference>
<dbReference type="InterPro" id="IPR054691">
    <property type="entry name" value="LeuA/HCS_post-cat"/>
</dbReference>
<dbReference type="InterPro" id="IPR036230">
    <property type="entry name" value="LeuA_allosteric_dom_sf"/>
</dbReference>
<dbReference type="InterPro" id="IPR005671">
    <property type="entry name" value="LeuA_bact_synth"/>
</dbReference>
<dbReference type="InterPro" id="IPR000891">
    <property type="entry name" value="PYR_CT"/>
</dbReference>
<dbReference type="NCBIfam" id="TIGR00973">
    <property type="entry name" value="leuA_bact"/>
    <property type="match status" value="1"/>
</dbReference>
<dbReference type="NCBIfam" id="NF002084">
    <property type="entry name" value="PRK00915.1-1"/>
    <property type="match status" value="1"/>
</dbReference>
<dbReference type="NCBIfam" id="NF002086">
    <property type="entry name" value="PRK00915.1-3"/>
    <property type="match status" value="1"/>
</dbReference>
<dbReference type="PANTHER" id="PTHR10277:SF9">
    <property type="entry name" value="2-ISOPROPYLMALATE SYNTHASE 1, CHLOROPLASTIC-RELATED"/>
    <property type="match status" value="1"/>
</dbReference>
<dbReference type="PANTHER" id="PTHR10277">
    <property type="entry name" value="HOMOCITRATE SYNTHASE-RELATED"/>
    <property type="match status" value="1"/>
</dbReference>
<dbReference type="Pfam" id="PF22617">
    <property type="entry name" value="HCS_D2"/>
    <property type="match status" value="1"/>
</dbReference>
<dbReference type="Pfam" id="PF00682">
    <property type="entry name" value="HMGL-like"/>
    <property type="match status" value="1"/>
</dbReference>
<dbReference type="Pfam" id="PF08502">
    <property type="entry name" value="LeuA_dimer"/>
    <property type="match status" value="1"/>
</dbReference>
<dbReference type="SMART" id="SM00917">
    <property type="entry name" value="LeuA_dimer"/>
    <property type="match status" value="1"/>
</dbReference>
<dbReference type="SUPFAM" id="SSF110921">
    <property type="entry name" value="2-isopropylmalate synthase LeuA, allosteric (dimerisation) domain"/>
    <property type="match status" value="1"/>
</dbReference>
<dbReference type="SUPFAM" id="SSF51569">
    <property type="entry name" value="Aldolase"/>
    <property type="match status" value="1"/>
</dbReference>
<dbReference type="PROSITE" id="PS00815">
    <property type="entry name" value="AIPM_HOMOCIT_SYNTH_1"/>
    <property type="match status" value="1"/>
</dbReference>
<dbReference type="PROSITE" id="PS00816">
    <property type="entry name" value="AIPM_HOMOCIT_SYNTH_2"/>
    <property type="match status" value="1"/>
</dbReference>
<dbReference type="PROSITE" id="PS50991">
    <property type="entry name" value="PYR_CT"/>
    <property type="match status" value="1"/>
</dbReference>
<sequence>MSQQVIIFDTTLRDGEQALQASLSVKEKLQIALALERMGVDVMEVGFPVSSPGDFESVQTIARQVKNSRVCALARCVEKDIDVAAESLKVAEAFRIHTFIATSPMHIATKLRSTLDEVIERAVYMVKRARNYTDDVEFSCEDAGRTPIADLARVVEAAINAGATTINIPDTVGYTLPFEFSNIISGLYERVPNIDKAVISVHTHDDLGMAVGNALAAVQAGARQVEGTLNGIGERAGNCALEEVIMAIKLRQNLMNVHTRINHQEIWRTSQTVSQICNMPIPANKAVVGSGAFAHSSGIHQDGVLKNRENYEIMTPESIGLNQVQLNLTSRSGRAAVKHRMEEMGYHENDYNLDDLYDAFLKLADKKGQVFDYDLEALAFINKQQEEPEHFRLEYFSVQSGSNAMATASVKLACGEEIKAEAANGNGPVDAVYQAINRITDYDIELVKYQLGAKGHGKNALGQVDIVVSYNGRHFHGVGLTTDIVESSARAMINVLNNIWRAGEVEKELQRKAQNKEHNQETV</sequence>
<name>LEU1_CROS8</name>
<organism>
    <name type="scientific">Cronobacter sakazakii (strain ATCC BAA-894)</name>
    <name type="common">Enterobacter sakazakii</name>
    <dbReference type="NCBI Taxonomy" id="290339"/>
    <lineage>
        <taxon>Bacteria</taxon>
        <taxon>Pseudomonadati</taxon>
        <taxon>Pseudomonadota</taxon>
        <taxon>Gammaproteobacteria</taxon>
        <taxon>Enterobacterales</taxon>
        <taxon>Enterobacteriaceae</taxon>
        <taxon>Cronobacter</taxon>
    </lineage>
</organism>
<comment type="function">
    <text evidence="1">Catalyzes the condensation of the acetyl group of acetyl-CoA with 3-methyl-2-oxobutanoate (2-ketoisovalerate) to form 3-carboxy-3-hydroxy-4-methylpentanoate (2-isopropylmalate).</text>
</comment>
<comment type="catalytic activity">
    <reaction evidence="1">
        <text>3-methyl-2-oxobutanoate + acetyl-CoA + H2O = (2S)-2-isopropylmalate + CoA + H(+)</text>
        <dbReference type="Rhea" id="RHEA:21524"/>
        <dbReference type="ChEBI" id="CHEBI:1178"/>
        <dbReference type="ChEBI" id="CHEBI:11851"/>
        <dbReference type="ChEBI" id="CHEBI:15377"/>
        <dbReference type="ChEBI" id="CHEBI:15378"/>
        <dbReference type="ChEBI" id="CHEBI:57287"/>
        <dbReference type="ChEBI" id="CHEBI:57288"/>
        <dbReference type="EC" id="2.3.3.13"/>
    </reaction>
</comment>
<comment type="cofactor">
    <cofactor evidence="1">
        <name>Mn(2+)</name>
        <dbReference type="ChEBI" id="CHEBI:29035"/>
    </cofactor>
</comment>
<comment type="pathway">
    <text evidence="1">Amino-acid biosynthesis; L-leucine biosynthesis; L-leucine from 3-methyl-2-oxobutanoate: step 1/4.</text>
</comment>
<comment type="subunit">
    <text evidence="1">Homodimer.</text>
</comment>
<comment type="subcellular location">
    <subcellularLocation>
        <location evidence="1">Cytoplasm</location>
    </subcellularLocation>
</comment>
<comment type="similarity">
    <text evidence="1">Belongs to the alpha-IPM synthase/homocitrate synthase family. LeuA type 1 subfamily.</text>
</comment>
<keyword id="KW-0028">Amino-acid biosynthesis</keyword>
<keyword id="KW-0100">Branched-chain amino acid biosynthesis</keyword>
<keyword id="KW-0963">Cytoplasm</keyword>
<keyword id="KW-0432">Leucine biosynthesis</keyword>
<keyword id="KW-0464">Manganese</keyword>
<keyword id="KW-0479">Metal-binding</keyword>
<keyword id="KW-1185">Reference proteome</keyword>
<keyword id="KW-0808">Transferase</keyword>